<keyword id="KW-0272">Extracellular matrix</keyword>
<keyword id="KW-0325">Glycoprotein</keyword>
<keyword id="KW-0378">Hydrolase</keyword>
<keyword id="KW-1185">Reference proteome</keyword>
<keyword id="KW-0964">Secreted</keyword>
<keyword id="KW-0732">Signal</keyword>
<comment type="function">
    <text evidence="3">May be involved in the coordinated dissolution of the cell wall matrix during abscission and in the secondary cell wall formation in xylem vessels.</text>
</comment>
<comment type="catalytic activity">
    <reaction>
        <text>Hydrolysis of terminal non-reducing alpha-L-arabinofuranoside residues in alpha-L-arabinosides.</text>
        <dbReference type="EC" id="3.2.1.55"/>
    </reaction>
</comment>
<comment type="subcellular location">
    <subcellularLocation>
        <location evidence="4">Secreted</location>
        <location evidence="4">Extracellular space</location>
        <location evidence="4">Extracellular matrix</location>
    </subcellularLocation>
</comment>
<comment type="tissue specificity">
    <text evidence="2 3">High expression in flowers, siliques and stems. Observed in the vasculature of older root tissue, at the tip of anthers and in the petal blade of fully developed flowers, in floral abscission zones and in silique replum tissue. Expressed in the cambium and phloem, but not in the xylem or in the vascular system of floral tissues.</text>
</comment>
<comment type="induction">
    <text evidence="2">Not induced by hormones or during leaf senescence.</text>
</comment>
<comment type="disruption phenotype">
    <text evidence="3">No visible phenotype, even in asd1 and asd2 double mutant.</text>
</comment>
<comment type="similarity">
    <text evidence="4">Belongs to the glycosyl hydrolase 51 family.</text>
</comment>
<comment type="sequence caution" evidence="4">
    <conflict type="erroneous gene model prediction">
        <sequence resource="EMBL-CDS" id="AAD40132"/>
    </conflict>
</comment>
<dbReference type="EC" id="3.2.1.55"/>
<dbReference type="EC" id="3.2.1.-"/>
<dbReference type="EMBL" id="AY243510">
    <property type="protein sequence ID" value="AAO92262.1"/>
    <property type="molecule type" value="mRNA"/>
</dbReference>
<dbReference type="EMBL" id="AF149413">
    <property type="protein sequence ID" value="AAD40132.1"/>
    <property type="status" value="ALT_SEQ"/>
    <property type="molecule type" value="Genomic_DNA"/>
</dbReference>
<dbReference type="EMBL" id="CP002688">
    <property type="protein sequence ID" value="AED93527.1"/>
    <property type="molecule type" value="Genomic_DNA"/>
</dbReference>
<dbReference type="EMBL" id="AY063925">
    <property type="protein sequence ID" value="AAL36281.1"/>
    <property type="molecule type" value="mRNA"/>
</dbReference>
<dbReference type="EMBL" id="BT006062">
    <property type="protein sequence ID" value="AAP04047.1"/>
    <property type="molecule type" value="mRNA"/>
</dbReference>
<dbReference type="RefSeq" id="NP_197984.2">
    <property type="nucleotide sequence ID" value="NM_122513.4"/>
</dbReference>
<dbReference type="SMR" id="Q8VZR2"/>
<dbReference type="FunCoup" id="Q8VZR2">
    <property type="interactions" value="194"/>
</dbReference>
<dbReference type="STRING" id="3702.Q8VZR2"/>
<dbReference type="CAZy" id="GH51">
    <property type="family name" value="Glycoside Hydrolase Family 51"/>
</dbReference>
<dbReference type="GlyCosmos" id="Q8VZR2">
    <property type="glycosylation" value="7 sites, No reported glycans"/>
</dbReference>
<dbReference type="GlyGen" id="Q8VZR2">
    <property type="glycosylation" value="7 sites"/>
</dbReference>
<dbReference type="PaxDb" id="3702-AT5G26120.1"/>
<dbReference type="ProteomicsDB" id="246848"/>
<dbReference type="EnsemblPlants" id="AT5G26120.1">
    <property type="protein sequence ID" value="AT5G26120.1"/>
    <property type="gene ID" value="AT5G26120"/>
</dbReference>
<dbReference type="GeneID" id="832681"/>
<dbReference type="Gramene" id="AT5G26120.1">
    <property type="protein sequence ID" value="AT5G26120.1"/>
    <property type="gene ID" value="AT5G26120"/>
</dbReference>
<dbReference type="KEGG" id="ath:AT5G26120"/>
<dbReference type="Araport" id="AT5G26120"/>
<dbReference type="TAIR" id="AT5G26120">
    <property type="gene designation" value="ASD2"/>
</dbReference>
<dbReference type="eggNOG" id="ENOG502QQEX">
    <property type="taxonomic scope" value="Eukaryota"/>
</dbReference>
<dbReference type="HOGENOM" id="CLU_010060_3_0_1"/>
<dbReference type="InParanoid" id="Q8VZR2"/>
<dbReference type="OMA" id="HNDQVET"/>
<dbReference type="PhylomeDB" id="Q8VZR2"/>
<dbReference type="BioCyc" id="ARA:AT5G26120-MONOMER"/>
<dbReference type="PRO" id="PR:Q8VZR2"/>
<dbReference type="Proteomes" id="UP000006548">
    <property type="component" value="Chromosome 5"/>
</dbReference>
<dbReference type="ExpressionAtlas" id="Q8VZR2">
    <property type="expression patterns" value="baseline and differential"/>
</dbReference>
<dbReference type="GO" id="GO:0005576">
    <property type="term" value="C:extracellular region"/>
    <property type="evidence" value="ECO:0007669"/>
    <property type="project" value="UniProtKB-KW"/>
</dbReference>
<dbReference type="GO" id="GO:0046556">
    <property type="term" value="F:alpha-L-arabinofuranosidase activity"/>
    <property type="evidence" value="ECO:0007669"/>
    <property type="project" value="UniProtKB-EC"/>
</dbReference>
<dbReference type="GO" id="GO:0046373">
    <property type="term" value="P:L-arabinose metabolic process"/>
    <property type="evidence" value="ECO:0007669"/>
    <property type="project" value="InterPro"/>
</dbReference>
<dbReference type="FunFam" id="3.20.20.80:FF:000025">
    <property type="entry name" value="Alpha-L-arabinofuranosidase 1"/>
    <property type="match status" value="1"/>
</dbReference>
<dbReference type="FunFam" id="2.60.120.260:FF:000063">
    <property type="entry name" value="Putative alpha-L-arabinofuranosidase family protein"/>
    <property type="match status" value="1"/>
</dbReference>
<dbReference type="Gene3D" id="3.20.20.80">
    <property type="entry name" value="Glycosidases"/>
    <property type="match status" value="1"/>
</dbReference>
<dbReference type="Gene3D" id="2.60.40.1180">
    <property type="entry name" value="Golgi alpha-mannosidase II"/>
    <property type="match status" value="1"/>
</dbReference>
<dbReference type="InterPro" id="IPR010720">
    <property type="entry name" value="Alpha-L-AF_C"/>
</dbReference>
<dbReference type="InterPro" id="IPR055235">
    <property type="entry name" value="ASD1_cat"/>
</dbReference>
<dbReference type="InterPro" id="IPR008979">
    <property type="entry name" value="Galactose-bd-like_sf"/>
</dbReference>
<dbReference type="InterPro" id="IPR013780">
    <property type="entry name" value="Glyco_hydro_b"/>
</dbReference>
<dbReference type="InterPro" id="IPR017853">
    <property type="entry name" value="Glycoside_hydrolase_SF"/>
</dbReference>
<dbReference type="InterPro" id="IPR051563">
    <property type="entry name" value="Glycosyl_Hydrolase_51"/>
</dbReference>
<dbReference type="PANTHER" id="PTHR31776">
    <property type="entry name" value="ALPHA-L-ARABINOFURANOSIDASE 1"/>
    <property type="match status" value="1"/>
</dbReference>
<dbReference type="PANTHER" id="PTHR31776:SF21">
    <property type="entry name" value="ALPHA-L-ARABINOFURANOSIDASE 2"/>
    <property type="match status" value="1"/>
</dbReference>
<dbReference type="Pfam" id="PF06964">
    <property type="entry name" value="Alpha-L-AF_C"/>
    <property type="match status" value="1"/>
</dbReference>
<dbReference type="Pfam" id="PF22848">
    <property type="entry name" value="ASD1_dom"/>
    <property type="match status" value="1"/>
</dbReference>
<dbReference type="SMART" id="SM00813">
    <property type="entry name" value="Alpha-L-AF_C"/>
    <property type="match status" value="1"/>
</dbReference>
<dbReference type="SUPFAM" id="SSF51445">
    <property type="entry name" value="(Trans)glycosidases"/>
    <property type="match status" value="1"/>
</dbReference>
<dbReference type="SUPFAM" id="SSF49785">
    <property type="entry name" value="Galactose-binding domain-like"/>
    <property type="match status" value="1"/>
</dbReference>
<dbReference type="SUPFAM" id="SSF51011">
    <property type="entry name" value="Glycosyl hydrolase domain"/>
    <property type="match status" value="1"/>
</dbReference>
<organism>
    <name type="scientific">Arabidopsis thaliana</name>
    <name type="common">Mouse-ear cress</name>
    <dbReference type="NCBI Taxonomy" id="3702"/>
    <lineage>
        <taxon>Eukaryota</taxon>
        <taxon>Viridiplantae</taxon>
        <taxon>Streptophyta</taxon>
        <taxon>Embryophyta</taxon>
        <taxon>Tracheophyta</taxon>
        <taxon>Spermatophyta</taxon>
        <taxon>Magnoliopsida</taxon>
        <taxon>eudicotyledons</taxon>
        <taxon>Gunneridae</taxon>
        <taxon>Pentapetalae</taxon>
        <taxon>rosids</taxon>
        <taxon>malvids</taxon>
        <taxon>Brassicales</taxon>
        <taxon>Brassicaceae</taxon>
        <taxon>Camelineae</taxon>
        <taxon>Arabidopsis</taxon>
    </lineage>
</organism>
<proteinExistence type="evidence at transcript level"/>
<name>ASD2_ARATH</name>
<reference key="1">
    <citation type="journal article" date="2003" name="J. Exp. Bot.">
        <title>Two alpha-L-arabinofuranosidase genes in Arabidopsis thaliana are differentially expressed during vegetative growth and flower development.</title>
        <authorList>
            <person name="Fulton L.M."/>
            <person name="Cobbett C.S."/>
        </authorList>
    </citation>
    <scope>NUCLEOTIDE SEQUENCE [MRNA]</scope>
    <scope>TISSUE SPECIFICITY</scope>
    <scope>INDUCTION BY HORMONES</scope>
    <source>
        <strain>cv. Columbia</strain>
    </source>
</reference>
<reference key="2">
    <citation type="journal article" date="2000" name="Nature">
        <title>Sequence and analysis of chromosome 5 of the plant Arabidopsis thaliana.</title>
        <authorList>
            <person name="Tabata S."/>
            <person name="Kaneko T."/>
            <person name="Nakamura Y."/>
            <person name="Kotani H."/>
            <person name="Kato T."/>
            <person name="Asamizu E."/>
            <person name="Miyajima N."/>
            <person name="Sasamoto S."/>
            <person name="Kimura T."/>
            <person name="Hosouchi T."/>
            <person name="Kawashima K."/>
            <person name="Kohara M."/>
            <person name="Matsumoto M."/>
            <person name="Matsuno A."/>
            <person name="Muraki A."/>
            <person name="Nakayama S."/>
            <person name="Nakazaki N."/>
            <person name="Naruo K."/>
            <person name="Okumura S."/>
            <person name="Shinpo S."/>
            <person name="Takeuchi C."/>
            <person name="Wada T."/>
            <person name="Watanabe A."/>
            <person name="Yamada M."/>
            <person name="Yasuda M."/>
            <person name="Sato S."/>
            <person name="de la Bastide M."/>
            <person name="Huang E."/>
            <person name="Spiegel L."/>
            <person name="Gnoj L."/>
            <person name="O'Shaughnessy A."/>
            <person name="Preston R."/>
            <person name="Habermann K."/>
            <person name="Murray J."/>
            <person name="Johnson D."/>
            <person name="Rohlfing T."/>
            <person name="Nelson J."/>
            <person name="Stoneking T."/>
            <person name="Pepin K."/>
            <person name="Spieth J."/>
            <person name="Sekhon M."/>
            <person name="Armstrong J."/>
            <person name="Becker M."/>
            <person name="Belter E."/>
            <person name="Cordum H."/>
            <person name="Cordes M."/>
            <person name="Courtney L."/>
            <person name="Courtney W."/>
            <person name="Dante M."/>
            <person name="Du H."/>
            <person name="Edwards J."/>
            <person name="Fryman J."/>
            <person name="Haakensen B."/>
            <person name="Lamar E."/>
            <person name="Latreille P."/>
            <person name="Leonard S."/>
            <person name="Meyer R."/>
            <person name="Mulvaney E."/>
            <person name="Ozersky P."/>
            <person name="Riley A."/>
            <person name="Strowmatt C."/>
            <person name="Wagner-McPherson C."/>
            <person name="Wollam A."/>
            <person name="Yoakum M."/>
            <person name="Bell M."/>
            <person name="Dedhia N."/>
            <person name="Parnell L."/>
            <person name="Shah R."/>
            <person name="Rodriguez M."/>
            <person name="Hoon See L."/>
            <person name="Vil D."/>
            <person name="Baker J."/>
            <person name="Kirchoff K."/>
            <person name="Toth K."/>
            <person name="King L."/>
            <person name="Bahret A."/>
            <person name="Miller B."/>
            <person name="Marra M.A."/>
            <person name="Martienssen R."/>
            <person name="McCombie W.R."/>
            <person name="Wilson R.K."/>
            <person name="Murphy G."/>
            <person name="Bancroft I."/>
            <person name="Volckaert G."/>
            <person name="Wambutt R."/>
            <person name="Duesterhoeft A."/>
            <person name="Stiekema W."/>
            <person name="Pohl T."/>
            <person name="Entian K.-D."/>
            <person name="Terryn N."/>
            <person name="Hartley N."/>
            <person name="Bent E."/>
            <person name="Johnson S."/>
            <person name="Langham S.-A."/>
            <person name="McCullagh B."/>
            <person name="Robben J."/>
            <person name="Grymonprez B."/>
            <person name="Zimmermann W."/>
            <person name="Ramsperger U."/>
            <person name="Wedler H."/>
            <person name="Balke K."/>
            <person name="Wedler E."/>
            <person name="Peters S."/>
            <person name="van Staveren M."/>
            <person name="Dirkse W."/>
            <person name="Mooijman P."/>
            <person name="Klein Lankhorst R."/>
            <person name="Weitzenegger T."/>
            <person name="Bothe G."/>
            <person name="Rose M."/>
            <person name="Hauf J."/>
            <person name="Berneiser S."/>
            <person name="Hempel S."/>
            <person name="Feldpausch M."/>
            <person name="Lamberth S."/>
            <person name="Villarroel R."/>
            <person name="Gielen J."/>
            <person name="Ardiles W."/>
            <person name="Bents O."/>
            <person name="Lemcke K."/>
            <person name="Kolesov G."/>
            <person name="Mayer K.F.X."/>
            <person name="Rudd S."/>
            <person name="Schoof H."/>
            <person name="Schueller C."/>
            <person name="Zaccaria P."/>
            <person name="Mewes H.-W."/>
            <person name="Bevan M."/>
            <person name="Fransz P.F."/>
        </authorList>
    </citation>
    <scope>NUCLEOTIDE SEQUENCE [LARGE SCALE GENOMIC DNA]</scope>
    <source>
        <strain>cv. Columbia</strain>
    </source>
</reference>
<reference key="3">
    <citation type="journal article" date="2017" name="Plant J.">
        <title>Araport11: a complete reannotation of the Arabidopsis thaliana reference genome.</title>
        <authorList>
            <person name="Cheng C.Y."/>
            <person name="Krishnakumar V."/>
            <person name="Chan A.P."/>
            <person name="Thibaud-Nissen F."/>
            <person name="Schobel S."/>
            <person name="Town C.D."/>
        </authorList>
    </citation>
    <scope>GENOME REANNOTATION</scope>
    <source>
        <strain>cv. Columbia</strain>
    </source>
</reference>
<reference key="4">
    <citation type="journal article" date="2003" name="Science">
        <title>Empirical analysis of transcriptional activity in the Arabidopsis genome.</title>
        <authorList>
            <person name="Yamada K."/>
            <person name="Lim J."/>
            <person name="Dale J.M."/>
            <person name="Chen H."/>
            <person name="Shinn P."/>
            <person name="Palm C.J."/>
            <person name="Southwick A.M."/>
            <person name="Wu H.C."/>
            <person name="Kim C.J."/>
            <person name="Nguyen M."/>
            <person name="Pham P.K."/>
            <person name="Cheuk R.F."/>
            <person name="Karlin-Newmann G."/>
            <person name="Liu S.X."/>
            <person name="Lam B."/>
            <person name="Sakano H."/>
            <person name="Wu T."/>
            <person name="Yu G."/>
            <person name="Miranda M."/>
            <person name="Quach H.L."/>
            <person name="Tripp M."/>
            <person name="Chang C.H."/>
            <person name="Lee J.M."/>
            <person name="Toriumi M.J."/>
            <person name="Chan M.M."/>
            <person name="Tang C.C."/>
            <person name="Onodera C.S."/>
            <person name="Deng J.M."/>
            <person name="Akiyama K."/>
            <person name="Ansari Y."/>
            <person name="Arakawa T."/>
            <person name="Banh J."/>
            <person name="Banno F."/>
            <person name="Bowser L."/>
            <person name="Brooks S.Y."/>
            <person name="Carninci P."/>
            <person name="Chao Q."/>
            <person name="Choy N."/>
            <person name="Enju A."/>
            <person name="Goldsmith A.D."/>
            <person name="Gurjal M."/>
            <person name="Hansen N.F."/>
            <person name="Hayashizaki Y."/>
            <person name="Johnson-Hopson C."/>
            <person name="Hsuan V.W."/>
            <person name="Iida K."/>
            <person name="Karnes M."/>
            <person name="Khan S."/>
            <person name="Koesema E."/>
            <person name="Ishida J."/>
            <person name="Jiang P.X."/>
            <person name="Jones T."/>
            <person name="Kawai J."/>
            <person name="Kamiya A."/>
            <person name="Meyers C."/>
            <person name="Nakajima M."/>
            <person name="Narusaka M."/>
            <person name="Seki M."/>
            <person name="Sakurai T."/>
            <person name="Satou M."/>
            <person name="Tamse R."/>
            <person name="Vaysberg M."/>
            <person name="Wallender E.K."/>
            <person name="Wong C."/>
            <person name="Yamamura Y."/>
            <person name="Yuan S."/>
            <person name="Shinozaki K."/>
            <person name="Davis R.W."/>
            <person name="Theologis A."/>
            <person name="Ecker J.R."/>
        </authorList>
    </citation>
    <scope>NUCLEOTIDE SEQUENCE [LARGE SCALE MRNA]</scope>
    <source>
        <strain>cv. Columbia</strain>
    </source>
</reference>
<reference key="5">
    <citation type="journal article" date="2008" name="Plant Physiol.">
        <title>Cell wall modifications in Arabidopsis plants with altered alpha-L-arabinofuranosidase activity.</title>
        <authorList>
            <person name="Chavez Montes R.A."/>
            <person name="Ranocha P."/>
            <person name="Martinez Y."/>
            <person name="Minic Z."/>
            <person name="Jouanin L."/>
            <person name="Marquis M."/>
            <person name="Saulnier L."/>
            <person name="Fulton L.M."/>
            <person name="Cobbett C.S."/>
            <person name="Bitton F."/>
            <person name="Renou J.-P."/>
            <person name="Jauneau A."/>
            <person name="Goffner D."/>
        </authorList>
    </citation>
    <scope>FUNCTION</scope>
    <scope>TISSUE SPECIFICITY</scope>
    <scope>DISRUPTION PHENOTYPE</scope>
</reference>
<gene>
    <name type="primary">ASD2</name>
    <name type="synonym">ARAF2</name>
    <name type="ordered locus">At5g26120</name>
    <name type="ORF">T1N24.13</name>
</gene>
<accession>Q8VZR2</accession>
<accession>Q9XH04</accession>
<protein>
    <recommendedName>
        <fullName>Alpha-L-arabinofuranosidase 2</fullName>
        <shortName>AtASD2</shortName>
        <ecNumber>3.2.1.55</ecNumber>
    </recommendedName>
    <alternativeName>
        <fullName>Beta-D-xylosidase</fullName>
        <ecNumber>3.2.1.-</ecNumber>
    </alternativeName>
</protein>
<evidence type="ECO:0000255" key="1"/>
<evidence type="ECO:0000269" key="2">
    <source>
    </source>
</evidence>
<evidence type="ECO:0000269" key="3">
    <source>
    </source>
</evidence>
<evidence type="ECO:0000305" key="4"/>
<feature type="signal peptide" evidence="1">
    <location>
        <begin position="1"/>
        <end position="24"/>
    </location>
</feature>
<feature type="chain" id="PRO_0000384372" description="Alpha-L-arabinofuranosidase 2">
    <location>
        <begin position="25"/>
        <end position="674"/>
    </location>
</feature>
<feature type="glycosylation site" description="N-linked (GlcNAc...) asparagine" evidence="1">
    <location>
        <position position="48"/>
    </location>
</feature>
<feature type="glycosylation site" description="N-linked (GlcNAc...) asparagine" evidence="1">
    <location>
        <position position="180"/>
    </location>
</feature>
<feature type="glycosylation site" description="N-linked (GlcNAc...) asparagine" evidence="1">
    <location>
        <position position="199"/>
    </location>
</feature>
<feature type="glycosylation site" description="N-linked (GlcNAc...) asparagine" evidence="1">
    <location>
        <position position="210"/>
    </location>
</feature>
<feature type="glycosylation site" description="N-linked (GlcNAc...) asparagine" evidence="1">
    <location>
        <position position="361"/>
    </location>
</feature>
<feature type="glycosylation site" description="N-linked (GlcNAc...) asparagine" evidence="1">
    <location>
        <position position="522"/>
    </location>
</feature>
<feature type="glycosylation site" description="N-linked (GlcNAc...) asparagine" evidence="1">
    <location>
        <position position="548"/>
    </location>
</feature>
<sequence>MDMETSWRFLRSVCLLSFILGSFSVYQTLCLVDAQEDAIVTLQVDASNVTRRPIPETLFGIFFEEINHAGAGGLWAELVSNRGFEAGGQIIPSNIWPWSIIGDESSIYVVTDRSSCFERNKIALRMEVLCDSNSCPLGGVGVYNPGYWGMNIEEGKKYKVVLYVRSTGDIDVSVSFTSSNGSVTLASENIIALASDLLNWTKKEMLLEANGTDNGARLQFTTTKKGSIWFDQVSAMPMDTYKGHGFRNDLFQMMVDLKPRFIRFPGGCFVEGDWLGNAFRWKETVRAWEERPGHYGDVWKYWTDDGLGHFEFFQLAEDLGASPIWVFNNGISHNDQVETKNVMPFVQEAIDGIEFARGDSNSTWGSVRAAMGHPEPFELKYVAVGNEDCFKSYYRGNYLEFYNAIKKAYPDIKIISNCDASAKPLDHPADYFDYHIYTLARDLFSKSHDFDNTPRNGPKAFVSEYAVNKADAKNGNLLAALGEAAFLLGLEKNSDIVEMVSYAPLFVNTNDRRWIPDAIVFNSSHLYGTPSYWVQHFFTESSGATLLNSTLKGKTSSVEASAISFQTNGKDYIQIKAVNFGEQSVNLKVAVTGLMAKFYGSKKKVLTSASVMDENSFSNPNMIVPQESLLEMTEQEDLMFVLPPHSFSSFDLLTESENVIKMPISDSYKKTSTM</sequence>